<feature type="chain" id="PRO_0000176691" description="Large ribosomal subunit protein bL9">
    <location>
        <begin position="1"/>
        <end position="150"/>
    </location>
</feature>
<comment type="function">
    <text evidence="1">Binds to the 23S rRNA.</text>
</comment>
<comment type="similarity">
    <text evidence="1">Belongs to the bacterial ribosomal protein bL9 family.</text>
</comment>
<organism>
    <name type="scientific">Streptococcus pyogenes serotype M18 (strain MGAS8232)</name>
    <dbReference type="NCBI Taxonomy" id="186103"/>
    <lineage>
        <taxon>Bacteria</taxon>
        <taxon>Bacillati</taxon>
        <taxon>Bacillota</taxon>
        <taxon>Bacilli</taxon>
        <taxon>Lactobacillales</taxon>
        <taxon>Streptococcaceae</taxon>
        <taxon>Streptococcus</taxon>
    </lineage>
</organism>
<accession>Q8NZ04</accession>
<sequence length="150" mass="16526">MKVIFLADVKGKGKKGEIKEVPTGYAQNFLIKKNLAKEATSQSIGELKGKQKAEEKAQAEILAEAQAVKAVLDEDKTRVQFQEKVGPDGRTFGSITAKKISEELQKQFGVKVDKRHIVLDHPIRAIGLIEVPVKLHKELTAEIKLAITEA</sequence>
<proteinExistence type="inferred from homology"/>
<keyword id="KW-0687">Ribonucleoprotein</keyword>
<keyword id="KW-0689">Ribosomal protein</keyword>
<keyword id="KW-0694">RNA-binding</keyword>
<keyword id="KW-0699">rRNA-binding</keyword>
<evidence type="ECO:0000255" key="1">
    <source>
        <dbReference type="HAMAP-Rule" id="MF_00503"/>
    </source>
</evidence>
<evidence type="ECO:0000305" key="2"/>
<gene>
    <name evidence="1" type="primary">rplI</name>
    <name evidence="1" type="synonym">rpl9</name>
    <name type="ordered locus">spyM18_2218</name>
</gene>
<name>RL9_STRP8</name>
<reference key="1">
    <citation type="journal article" date="2002" name="Proc. Natl. Acad. Sci. U.S.A.">
        <title>Genome sequence and comparative microarray analysis of serotype M18 group A Streptococcus strains associated with acute rheumatic fever outbreaks.</title>
        <authorList>
            <person name="Smoot J.C."/>
            <person name="Barbian K.D."/>
            <person name="Van Gompel J.J."/>
            <person name="Smoot L.M."/>
            <person name="Chaussee M.S."/>
            <person name="Sylva G.L."/>
            <person name="Sturdevant D.E."/>
            <person name="Ricklefs S.M."/>
            <person name="Porcella S.F."/>
            <person name="Parkins L.D."/>
            <person name="Beres S.B."/>
            <person name="Campbell D.S."/>
            <person name="Smith T.M."/>
            <person name="Zhang Q."/>
            <person name="Kapur V."/>
            <person name="Daly J.A."/>
            <person name="Veasy L.G."/>
            <person name="Musser J.M."/>
        </authorList>
    </citation>
    <scope>NUCLEOTIDE SEQUENCE [LARGE SCALE GENOMIC DNA]</scope>
    <source>
        <strain>MGAS8232</strain>
    </source>
</reference>
<protein>
    <recommendedName>
        <fullName evidence="1">Large ribosomal subunit protein bL9</fullName>
    </recommendedName>
    <alternativeName>
        <fullName evidence="2">50S ribosomal protein L9</fullName>
    </alternativeName>
</protein>
<dbReference type="EMBL" id="AE009949">
    <property type="protein sequence ID" value="AAL98652.1"/>
    <property type="molecule type" value="Genomic_DNA"/>
</dbReference>
<dbReference type="RefSeq" id="WP_002982086.1">
    <property type="nucleotide sequence ID" value="NC_003485.1"/>
</dbReference>
<dbReference type="SMR" id="Q8NZ04"/>
<dbReference type="KEGG" id="spm:spyM18_2218"/>
<dbReference type="HOGENOM" id="CLU_078938_3_2_9"/>
<dbReference type="GO" id="GO:1990904">
    <property type="term" value="C:ribonucleoprotein complex"/>
    <property type="evidence" value="ECO:0007669"/>
    <property type="project" value="UniProtKB-KW"/>
</dbReference>
<dbReference type="GO" id="GO:0005840">
    <property type="term" value="C:ribosome"/>
    <property type="evidence" value="ECO:0007669"/>
    <property type="project" value="UniProtKB-KW"/>
</dbReference>
<dbReference type="GO" id="GO:0019843">
    <property type="term" value="F:rRNA binding"/>
    <property type="evidence" value="ECO:0007669"/>
    <property type="project" value="UniProtKB-UniRule"/>
</dbReference>
<dbReference type="GO" id="GO:0003735">
    <property type="term" value="F:structural constituent of ribosome"/>
    <property type="evidence" value="ECO:0007669"/>
    <property type="project" value="InterPro"/>
</dbReference>
<dbReference type="GO" id="GO:0006412">
    <property type="term" value="P:translation"/>
    <property type="evidence" value="ECO:0007669"/>
    <property type="project" value="UniProtKB-UniRule"/>
</dbReference>
<dbReference type="FunFam" id="3.40.5.10:FF:000002">
    <property type="entry name" value="50S ribosomal protein L9"/>
    <property type="match status" value="1"/>
</dbReference>
<dbReference type="Gene3D" id="3.10.430.100">
    <property type="entry name" value="Ribosomal protein L9, C-terminal domain"/>
    <property type="match status" value="1"/>
</dbReference>
<dbReference type="Gene3D" id="3.40.5.10">
    <property type="entry name" value="Ribosomal protein L9, N-terminal domain"/>
    <property type="match status" value="1"/>
</dbReference>
<dbReference type="HAMAP" id="MF_00503">
    <property type="entry name" value="Ribosomal_bL9"/>
    <property type="match status" value="1"/>
</dbReference>
<dbReference type="InterPro" id="IPR000244">
    <property type="entry name" value="Ribosomal_bL9"/>
</dbReference>
<dbReference type="InterPro" id="IPR009027">
    <property type="entry name" value="Ribosomal_bL9/RNase_H1_N"/>
</dbReference>
<dbReference type="InterPro" id="IPR020594">
    <property type="entry name" value="Ribosomal_bL9_bac/chp"/>
</dbReference>
<dbReference type="InterPro" id="IPR020069">
    <property type="entry name" value="Ribosomal_bL9_C"/>
</dbReference>
<dbReference type="InterPro" id="IPR036791">
    <property type="entry name" value="Ribosomal_bL9_C_sf"/>
</dbReference>
<dbReference type="InterPro" id="IPR020070">
    <property type="entry name" value="Ribosomal_bL9_N"/>
</dbReference>
<dbReference type="InterPro" id="IPR036935">
    <property type="entry name" value="Ribosomal_bL9_N_sf"/>
</dbReference>
<dbReference type="NCBIfam" id="TIGR00158">
    <property type="entry name" value="L9"/>
    <property type="match status" value="1"/>
</dbReference>
<dbReference type="PANTHER" id="PTHR21368">
    <property type="entry name" value="50S RIBOSOMAL PROTEIN L9"/>
    <property type="match status" value="1"/>
</dbReference>
<dbReference type="Pfam" id="PF03948">
    <property type="entry name" value="Ribosomal_L9_C"/>
    <property type="match status" value="1"/>
</dbReference>
<dbReference type="Pfam" id="PF01281">
    <property type="entry name" value="Ribosomal_L9_N"/>
    <property type="match status" value="1"/>
</dbReference>
<dbReference type="SUPFAM" id="SSF55658">
    <property type="entry name" value="L9 N-domain-like"/>
    <property type="match status" value="1"/>
</dbReference>
<dbReference type="SUPFAM" id="SSF55653">
    <property type="entry name" value="Ribosomal protein L9 C-domain"/>
    <property type="match status" value="1"/>
</dbReference>
<dbReference type="PROSITE" id="PS00651">
    <property type="entry name" value="RIBOSOMAL_L9"/>
    <property type="match status" value="1"/>
</dbReference>